<protein>
    <recommendedName>
        <fullName>F-box only protein 47</fullName>
    </recommendedName>
</protein>
<evidence type="ECO:0000250" key="1"/>
<evidence type="ECO:0000255" key="2">
    <source>
        <dbReference type="PROSITE-ProRule" id="PRU00080"/>
    </source>
</evidence>
<accession>A2A6H3</accession>
<accession>B2RY07</accession>
<feature type="chain" id="PRO_0000307726" description="F-box only protein 47">
    <location>
        <begin position="1"/>
        <end position="451"/>
    </location>
</feature>
<feature type="domain" description="F-box" evidence="2">
    <location>
        <begin position="41"/>
        <end position="91"/>
    </location>
</feature>
<comment type="function">
    <text evidence="1">Probably recognizes and binds to some phosphorylated proteins and promotes their ubiquitination and degradation.</text>
</comment>
<comment type="subunit">
    <text evidence="1">Part of a SCF (SKP1-cullin-F-box) protein ligase complex.</text>
</comment>
<keyword id="KW-1185">Reference proteome</keyword>
<keyword id="KW-0833">Ubl conjugation pathway</keyword>
<organism>
    <name type="scientific">Mus musculus</name>
    <name type="common">Mouse</name>
    <dbReference type="NCBI Taxonomy" id="10090"/>
    <lineage>
        <taxon>Eukaryota</taxon>
        <taxon>Metazoa</taxon>
        <taxon>Chordata</taxon>
        <taxon>Craniata</taxon>
        <taxon>Vertebrata</taxon>
        <taxon>Euteleostomi</taxon>
        <taxon>Mammalia</taxon>
        <taxon>Eutheria</taxon>
        <taxon>Euarchontoglires</taxon>
        <taxon>Glires</taxon>
        <taxon>Rodentia</taxon>
        <taxon>Myomorpha</taxon>
        <taxon>Muroidea</taxon>
        <taxon>Muridae</taxon>
        <taxon>Murinae</taxon>
        <taxon>Mus</taxon>
        <taxon>Mus</taxon>
    </lineage>
</organism>
<sequence>MASRVNTSFTLIPKQKCRRSNHHSSYFCNTLDSDPQLLSTLGNFKVLPLEILHIILRYLSVKDIGMLSMVSKTVSQHIINYISTSSGSRRLLLQNFHDLDLPGTKEETALLEHYRALGLLFKRCTLLLPTKERLKYIHKILSEVSCFKFSGCSVPLQCLGLSCYGMFLQTLTAGWDELECHRVYNFLCELTNLSRKMQTVVCNKPGSARKLELRVRLFCRNVLLDHWTHRSDSAFWLTRILKPWPMVNQARLLYIIFGPTSPHDGQVIWQEMIEGPTDESSLKGLANAIKLLYDTGAKGWTADDVISLVDELSVVPREWLLENNARLLILSGNNICFTFMASKAVNGRAVELARLVVFLALVCEKELYCMDWTVRMMQKVCKVFSTAAERKSFLQSIANAFACVTMEMLQPVMSGDRDDDDRGFLNLFHLLHAQANFHKEVLYLTMNAISS</sequence>
<gene>
    <name type="primary">Fbxo47</name>
</gene>
<proteinExistence type="evidence at transcript level"/>
<name>FBX47_MOUSE</name>
<dbReference type="EMBL" id="AL596446">
    <property type="status" value="NOT_ANNOTATED_CDS"/>
    <property type="molecule type" value="Genomic_DNA"/>
</dbReference>
<dbReference type="EMBL" id="BC158049">
    <property type="protein sequence ID" value="AAI58050.1"/>
    <property type="molecule type" value="mRNA"/>
</dbReference>
<dbReference type="CCDS" id="CCDS36299.1"/>
<dbReference type="RefSeq" id="NP_001074904.1">
    <property type="nucleotide sequence ID" value="NM_001081435.2"/>
</dbReference>
<dbReference type="RefSeq" id="NP_001405037.1">
    <property type="nucleotide sequence ID" value="NM_001418108.1"/>
</dbReference>
<dbReference type="RefSeq" id="XP_006534391.1">
    <property type="nucleotide sequence ID" value="XM_006534328.5"/>
</dbReference>
<dbReference type="RefSeq" id="XP_006534392.1">
    <property type="nucleotide sequence ID" value="XM_006534329.5"/>
</dbReference>
<dbReference type="RefSeq" id="XP_006534393.1">
    <property type="nucleotide sequence ID" value="XM_006534330.3"/>
</dbReference>
<dbReference type="BioGRID" id="215685">
    <property type="interactions" value="2"/>
</dbReference>
<dbReference type="FunCoup" id="A2A6H3">
    <property type="interactions" value="29"/>
</dbReference>
<dbReference type="STRING" id="10090.ENSMUSP00000091471"/>
<dbReference type="iPTMnet" id="A2A6H3"/>
<dbReference type="PhosphoSitePlus" id="A2A6H3"/>
<dbReference type="PaxDb" id="10090-ENSMUSP00000091471"/>
<dbReference type="Antibodypedia" id="65659">
    <property type="antibodies" value="61 antibodies from 13 providers"/>
</dbReference>
<dbReference type="Ensembl" id="ENSMUST00000093939.4">
    <property type="protein sequence ID" value="ENSMUSP00000091471.4"/>
    <property type="gene ID" value="ENSMUSG00000070336.4"/>
</dbReference>
<dbReference type="GeneID" id="72973"/>
<dbReference type="KEGG" id="mmu:72973"/>
<dbReference type="UCSC" id="uc007lfb.1">
    <property type="organism name" value="mouse"/>
</dbReference>
<dbReference type="AGR" id="MGI:1920223"/>
<dbReference type="CTD" id="494188"/>
<dbReference type="MGI" id="MGI:1920223">
    <property type="gene designation" value="Fbxo47"/>
</dbReference>
<dbReference type="VEuPathDB" id="HostDB:ENSMUSG00000070336"/>
<dbReference type="eggNOG" id="ENOG502QV8T">
    <property type="taxonomic scope" value="Eukaryota"/>
</dbReference>
<dbReference type="GeneTree" id="ENSGT00390000014175"/>
<dbReference type="HOGENOM" id="CLU_048746_0_0_1"/>
<dbReference type="InParanoid" id="A2A6H3"/>
<dbReference type="OMA" id="AFACVTM"/>
<dbReference type="OrthoDB" id="9858120at2759"/>
<dbReference type="PhylomeDB" id="A2A6H3"/>
<dbReference type="TreeFam" id="TF343134"/>
<dbReference type="BioGRID-ORCS" id="72973">
    <property type="hits" value="3 hits in 77 CRISPR screens"/>
</dbReference>
<dbReference type="ChiTaRS" id="Fbxo47">
    <property type="organism name" value="mouse"/>
</dbReference>
<dbReference type="PRO" id="PR:A2A6H3"/>
<dbReference type="Proteomes" id="UP000000589">
    <property type="component" value="Chromosome 11"/>
</dbReference>
<dbReference type="RNAct" id="A2A6H3">
    <property type="molecule type" value="protein"/>
</dbReference>
<dbReference type="Bgee" id="ENSMUSG00000070336">
    <property type="expression patterns" value="Expressed in spermatid and 53 other cell types or tissues"/>
</dbReference>
<dbReference type="CDD" id="cd22112">
    <property type="entry name" value="F-box_FBXO47"/>
    <property type="match status" value="1"/>
</dbReference>
<dbReference type="InterPro" id="IPR056622">
    <property type="entry name" value="ARM_FBXO47"/>
</dbReference>
<dbReference type="InterPro" id="IPR036047">
    <property type="entry name" value="F-box-like_dom_sf"/>
</dbReference>
<dbReference type="InterPro" id="IPR001810">
    <property type="entry name" value="F-box_dom"/>
</dbReference>
<dbReference type="InterPro" id="IPR038946">
    <property type="entry name" value="FBXO47"/>
</dbReference>
<dbReference type="PANTHER" id="PTHR34098">
    <property type="entry name" value="F-BOX ONLY PROTEIN 47"/>
    <property type="match status" value="1"/>
</dbReference>
<dbReference type="PANTHER" id="PTHR34098:SF1">
    <property type="entry name" value="F-BOX ONLY PROTEIN 47"/>
    <property type="match status" value="1"/>
</dbReference>
<dbReference type="Pfam" id="PF24467">
    <property type="entry name" value="ARM_FBXO47"/>
    <property type="match status" value="1"/>
</dbReference>
<dbReference type="Pfam" id="PF00646">
    <property type="entry name" value="F-box"/>
    <property type="match status" value="1"/>
</dbReference>
<dbReference type="SUPFAM" id="SSF81383">
    <property type="entry name" value="F-box domain"/>
    <property type="match status" value="1"/>
</dbReference>
<dbReference type="PROSITE" id="PS50181">
    <property type="entry name" value="FBOX"/>
    <property type="match status" value="1"/>
</dbReference>
<reference key="1">
    <citation type="journal article" date="2009" name="PLoS Biol.">
        <title>Lineage-specific biology revealed by a finished genome assembly of the mouse.</title>
        <authorList>
            <person name="Church D.M."/>
            <person name="Goodstadt L."/>
            <person name="Hillier L.W."/>
            <person name="Zody M.C."/>
            <person name="Goldstein S."/>
            <person name="She X."/>
            <person name="Bult C.J."/>
            <person name="Agarwala R."/>
            <person name="Cherry J.L."/>
            <person name="DiCuccio M."/>
            <person name="Hlavina W."/>
            <person name="Kapustin Y."/>
            <person name="Meric P."/>
            <person name="Maglott D."/>
            <person name="Birtle Z."/>
            <person name="Marques A.C."/>
            <person name="Graves T."/>
            <person name="Zhou S."/>
            <person name="Teague B."/>
            <person name="Potamousis K."/>
            <person name="Churas C."/>
            <person name="Place M."/>
            <person name="Herschleb J."/>
            <person name="Runnheim R."/>
            <person name="Forrest D."/>
            <person name="Amos-Landgraf J."/>
            <person name="Schwartz D.C."/>
            <person name="Cheng Z."/>
            <person name="Lindblad-Toh K."/>
            <person name="Eichler E.E."/>
            <person name="Ponting C.P."/>
        </authorList>
    </citation>
    <scope>NUCLEOTIDE SEQUENCE [LARGE SCALE GENOMIC DNA]</scope>
    <source>
        <strain>C57BL/6J</strain>
    </source>
</reference>
<reference key="2">
    <citation type="journal article" date="2004" name="Genome Res.">
        <title>The status, quality, and expansion of the NIH full-length cDNA project: the Mammalian Gene Collection (MGC).</title>
        <authorList>
            <consortium name="The MGC Project Team"/>
        </authorList>
    </citation>
    <scope>NUCLEOTIDE SEQUENCE [LARGE SCALE MRNA]</scope>
    <source>
        <tissue>Brain</tissue>
    </source>
</reference>